<accession>Q6CKU6</accession>
<sequence length="758" mass="87016">MSKKRGRRHTAKEDSNSDYETDTYGLADGDDKSRPYYLVEDLPCSLEPPRYDTFTYPLSVKDSAVLYSSLLSSRRTWVKGEMFQLYWAKQYMNTKEKEELKKEGIDPDSIDQSAAREKMNKLCDCMMQGGPHQFPIRLFILKNDEVERAWNEAKEAKKRDREVRKKQQEEEKRLKKERKLLRKKLKQEALEKEKEKNKDKVKKPRKPYKKSAKRLEAERLKKEEKAKAAANTSGVKKKISKTSNVKKKKMKAVVRPKPYEEQVMILNLNKMARNDKQLNDLMIKVAGGQASLAEITQFKKYIEKAKAMPPPSGTWKPMLEEVEVTDDGESDEDVKELEVTEKSEDVTPTEVALPKAAVAAKEVKDVVVTPNLPPGTENSGNGKPPSLDESNAQESTDVNKNQPIQRLNISKNVQSVKNDITENTDLASNEHMNEKQVQKTPESTTEHKPDEKPKDAAMSKSNEKKPDEDTAQDTSKDDENKSDKSDSDSDSDSDSDNDSSSSDESDNEDNTSQTKNSIDNTDDGVTSEKADTNTDVSSDKPPDDIKSEGEVAAPRVKRKYRRRSKVKTEEEEEEEKAMQLTTFQQKYSNGADMVFEYVENANVRFLLPKYSILEQLEGEESYLLSFIVVHNRREVALFTTRKLKELNKKKNKEDHIKPEDYNPFEDARCPDPLFSSITLKLTGIPKKFSNIILNSFHPQERVQLYMKSIIDRGSRLSGYNLWYQLDAYDDKELAERLRVGLKEYEQTFKSKRQKKQIL</sequence>
<comment type="function">
    <text evidence="1">Component of the SWR1 complex which mediates the ATP-dependent exchange of histone H2A for the H2A variant HZT1 leading to transcriptional regulation of selected genes by chromatin remodeling. Involved in chromosome stability (By similarity).</text>
</comment>
<comment type="subunit">
    <text evidence="1">Component of the SWR1 chromatin remodeling complex.</text>
</comment>
<comment type="subcellular location">
    <subcellularLocation>
        <location evidence="1">Nucleus</location>
    </subcellularLocation>
</comment>
<comment type="similarity">
    <text evidence="4">Belongs to the SWC3 family.</text>
</comment>
<gene>
    <name type="primary">SWC3</name>
    <name type="ordered locus">KLLA0F08019g</name>
</gene>
<keyword id="KW-0010">Activator</keyword>
<keyword id="KW-0156">Chromatin regulator</keyword>
<keyword id="KW-0175">Coiled coil</keyword>
<keyword id="KW-0539">Nucleus</keyword>
<keyword id="KW-1185">Reference proteome</keyword>
<keyword id="KW-0804">Transcription</keyword>
<keyword id="KW-0805">Transcription regulation</keyword>
<proteinExistence type="inferred from homology"/>
<reference key="1">
    <citation type="journal article" date="2004" name="Nature">
        <title>Genome evolution in yeasts.</title>
        <authorList>
            <person name="Dujon B."/>
            <person name="Sherman D."/>
            <person name="Fischer G."/>
            <person name="Durrens P."/>
            <person name="Casaregola S."/>
            <person name="Lafontaine I."/>
            <person name="de Montigny J."/>
            <person name="Marck C."/>
            <person name="Neuveglise C."/>
            <person name="Talla E."/>
            <person name="Goffard N."/>
            <person name="Frangeul L."/>
            <person name="Aigle M."/>
            <person name="Anthouard V."/>
            <person name="Babour A."/>
            <person name="Barbe V."/>
            <person name="Barnay S."/>
            <person name="Blanchin S."/>
            <person name="Beckerich J.-M."/>
            <person name="Beyne E."/>
            <person name="Bleykasten C."/>
            <person name="Boisrame A."/>
            <person name="Boyer J."/>
            <person name="Cattolico L."/>
            <person name="Confanioleri F."/>
            <person name="de Daruvar A."/>
            <person name="Despons L."/>
            <person name="Fabre E."/>
            <person name="Fairhead C."/>
            <person name="Ferry-Dumazet H."/>
            <person name="Groppi A."/>
            <person name="Hantraye F."/>
            <person name="Hennequin C."/>
            <person name="Jauniaux N."/>
            <person name="Joyet P."/>
            <person name="Kachouri R."/>
            <person name="Kerrest A."/>
            <person name="Koszul R."/>
            <person name="Lemaire M."/>
            <person name="Lesur I."/>
            <person name="Ma L."/>
            <person name="Muller H."/>
            <person name="Nicaud J.-M."/>
            <person name="Nikolski M."/>
            <person name="Oztas S."/>
            <person name="Ozier-Kalogeropoulos O."/>
            <person name="Pellenz S."/>
            <person name="Potier S."/>
            <person name="Richard G.-F."/>
            <person name="Straub M.-L."/>
            <person name="Suleau A."/>
            <person name="Swennen D."/>
            <person name="Tekaia F."/>
            <person name="Wesolowski-Louvel M."/>
            <person name="Westhof E."/>
            <person name="Wirth B."/>
            <person name="Zeniou-Meyer M."/>
            <person name="Zivanovic Y."/>
            <person name="Bolotin-Fukuhara M."/>
            <person name="Thierry A."/>
            <person name="Bouchier C."/>
            <person name="Caudron B."/>
            <person name="Scarpelli C."/>
            <person name="Gaillardin C."/>
            <person name="Weissenbach J."/>
            <person name="Wincker P."/>
            <person name="Souciet J.-L."/>
        </authorList>
    </citation>
    <scope>NUCLEOTIDE SEQUENCE [LARGE SCALE GENOMIC DNA]</scope>
    <source>
        <strain>ATCC 8585 / CBS 2359 / DSM 70799 / NBRC 1267 / NRRL Y-1140 / WM37</strain>
    </source>
</reference>
<name>SWC3_KLULA</name>
<protein>
    <recommendedName>
        <fullName>SWR1-complex protein 3</fullName>
    </recommendedName>
</protein>
<dbReference type="EMBL" id="CR382126">
    <property type="protein sequence ID" value="CAG98151.1"/>
    <property type="molecule type" value="Genomic_DNA"/>
</dbReference>
<dbReference type="RefSeq" id="XP_455443.1">
    <property type="nucleotide sequence ID" value="XM_455443.1"/>
</dbReference>
<dbReference type="SMR" id="Q6CKU6"/>
<dbReference type="FunCoup" id="Q6CKU6">
    <property type="interactions" value="144"/>
</dbReference>
<dbReference type="STRING" id="284590.Q6CKU6"/>
<dbReference type="PaxDb" id="284590-Q6CKU6"/>
<dbReference type="KEGG" id="kla:KLLA0_F08019g"/>
<dbReference type="eggNOG" id="ENOG502QWM7">
    <property type="taxonomic scope" value="Eukaryota"/>
</dbReference>
<dbReference type="HOGENOM" id="CLU_008595_1_0_1"/>
<dbReference type="InParanoid" id="Q6CKU6"/>
<dbReference type="OMA" id="MQKMCDC"/>
<dbReference type="Proteomes" id="UP000000598">
    <property type="component" value="Chromosome F"/>
</dbReference>
<dbReference type="GO" id="GO:0000812">
    <property type="term" value="C:Swr1 complex"/>
    <property type="evidence" value="ECO:0007669"/>
    <property type="project" value="InterPro"/>
</dbReference>
<dbReference type="GO" id="GO:0140849">
    <property type="term" value="F:ATP-dependent H2AZ histone chaperone activity"/>
    <property type="evidence" value="ECO:0007669"/>
    <property type="project" value="InterPro"/>
</dbReference>
<dbReference type="InterPro" id="IPR037651">
    <property type="entry name" value="Swc3"/>
</dbReference>
<dbReference type="PANTHER" id="PTHR28108">
    <property type="entry name" value="SWR1-COMPLEX PROTEIN 3"/>
    <property type="match status" value="1"/>
</dbReference>
<dbReference type="PANTHER" id="PTHR28108:SF1">
    <property type="entry name" value="SWR1-COMPLEX PROTEIN 3"/>
    <property type="match status" value="1"/>
</dbReference>
<dbReference type="Pfam" id="PF24707">
    <property type="entry name" value="Swc3"/>
    <property type="match status" value="1"/>
</dbReference>
<organism>
    <name type="scientific">Kluyveromyces lactis (strain ATCC 8585 / CBS 2359 / DSM 70799 / NBRC 1267 / NRRL Y-1140 / WM37)</name>
    <name type="common">Yeast</name>
    <name type="synonym">Candida sphaerica</name>
    <dbReference type="NCBI Taxonomy" id="284590"/>
    <lineage>
        <taxon>Eukaryota</taxon>
        <taxon>Fungi</taxon>
        <taxon>Dikarya</taxon>
        <taxon>Ascomycota</taxon>
        <taxon>Saccharomycotina</taxon>
        <taxon>Saccharomycetes</taxon>
        <taxon>Saccharomycetales</taxon>
        <taxon>Saccharomycetaceae</taxon>
        <taxon>Kluyveromyces</taxon>
    </lineage>
</organism>
<evidence type="ECO:0000250" key="1"/>
<evidence type="ECO:0000255" key="2"/>
<evidence type="ECO:0000256" key="3">
    <source>
        <dbReference type="SAM" id="MobiDB-lite"/>
    </source>
</evidence>
<evidence type="ECO:0000305" key="4"/>
<feature type="chain" id="PRO_0000076334" description="SWR1-complex protein 3">
    <location>
        <begin position="1"/>
        <end position="758"/>
    </location>
</feature>
<feature type="region of interest" description="Disordered" evidence="3">
    <location>
        <begin position="1"/>
        <end position="34"/>
    </location>
</feature>
<feature type="region of interest" description="Disordered" evidence="3">
    <location>
        <begin position="153"/>
        <end position="253"/>
    </location>
</feature>
<feature type="region of interest" description="Disordered" evidence="3">
    <location>
        <begin position="323"/>
        <end position="577"/>
    </location>
</feature>
<feature type="coiled-coil region" evidence="2">
    <location>
        <begin position="151"/>
        <end position="233"/>
    </location>
</feature>
<feature type="compositionally biased region" description="Basic residues" evidence="3">
    <location>
        <begin position="1"/>
        <end position="10"/>
    </location>
</feature>
<feature type="compositionally biased region" description="Basic and acidic residues" evidence="3">
    <location>
        <begin position="153"/>
        <end position="174"/>
    </location>
</feature>
<feature type="compositionally biased region" description="Basic residues" evidence="3">
    <location>
        <begin position="175"/>
        <end position="185"/>
    </location>
</feature>
<feature type="compositionally biased region" description="Basic and acidic residues" evidence="3">
    <location>
        <begin position="186"/>
        <end position="198"/>
    </location>
</feature>
<feature type="compositionally biased region" description="Basic residues" evidence="3">
    <location>
        <begin position="199"/>
        <end position="212"/>
    </location>
</feature>
<feature type="compositionally biased region" description="Basic and acidic residues" evidence="3">
    <location>
        <begin position="213"/>
        <end position="227"/>
    </location>
</feature>
<feature type="compositionally biased region" description="Basic residues" evidence="3">
    <location>
        <begin position="235"/>
        <end position="253"/>
    </location>
</feature>
<feature type="compositionally biased region" description="Acidic residues" evidence="3">
    <location>
        <begin position="323"/>
        <end position="335"/>
    </location>
</feature>
<feature type="compositionally biased region" description="Basic and acidic residues" evidence="3">
    <location>
        <begin position="336"/>
        <end position="345"/>
    </location>
</feature>
<feature type="compositionally biased region" description="Low complexity" evidence="3">
    <location>
        <begin position="351"/>
        <end position="360"/>
    </location>
</feature>
<feature type="compositionally biased region" description="Polar residues" evidence="3">
    <location>
        <begin position="388"/>
        <end position="427"/>
    </location>
</feature>
<feature type="compositionally biased region" description="Basic and acidic residues" evidence="3">
    <location>
        <begin position="444"/>
        <end position="487"/>
    </location>
</feature>
<feature type="compositionally biased region" description="Acidic residues" evidence="3">
    <location>
        <begin position="488"/>
        <end position="509"/>
    </location>
</feature>
<feature type="compositionally biased region" description="Basic and acidic residues" evidence="3">
    <location>
        <begin position="526"/>
        <end position="549"/>
    </location>
</feature>
<feature type="compositionally biased region" description="Basic residues" evidence="3">
    <location>
        <begin position="555"/>
        <end position="565"/>
    </location>
</feature>